<reference key="1">
    <citation type="submission" date="2007-07" db="EMBL/GenBank/DDBJ databases">
        <title>Complete genome sequence of Campylobacter hominis ATCC BAA-381, a commensal isolated from the human gastrointestinal tract.</title>
        <authorList>
            <person name="Fouts D.E."/>
            <person name="Mongodin E.F."/>
            <person name="Puiu D."/>
            <person name="Sebastian Y."/>
            <person name="Miller W.G."/>
            <person name="Mandrell R.E."/>
            <person name="Nelson K.E."/>
        </authorList>
    </citation>
    <scope>NUCLEOTIDE SEQUENCE [LARGE SCALE GENOMIC DNA]</scope>
    <source>
        <strain>ATCC BAA-381 / DSM 21671 / CCUG 45161 / LMG 19568 / NCTC 13146 / CH001A</strain>
    </source>
</reference>
<dbReference type="EC" id="6.3.5.7" evidence="1"/>
<dbReference type="EMBL" id="CP000776">
    <property type="protein sequence ID" value="ABS52353.1"/>
    <property type="molecule type" value="Genomic_DNA"/>
</dbReference>
<dbReference type="RefSeq" id="WP_012108760.1">
    <property type="nucleotide sequence ID" value="NC_009714.1"/>
</dbReference>
<dbReference type="SMR" id="A7I1S8"/>
<dbReference type="STRING" id="360107.CHAB381_0907"/>
<dbReference type="KEGG" id="cha:CHAB381_0907"/>
<dbReference type="eggNOG" id="COG0154">
    <property type="taxonomic scope" value="Bacteria"/>
</dbReference>
<dbReference type="HOGENOM" id="CLU_009600_0_3_7"/>
<dbReference type="OrthoDB" id="9811471at2"/>
<dbReference type="Proteomes" id="UP000002407">
    <property type="component" value="Chromosome"/>
</dbReference>
<dbReference type="GO" id="GO:0030956">
    <property type="term" value="C:glutamyl-tRNA(Gln) amidotransferase complex"/>
    <property type="evidence" value="ECO:0007669"/>
    <property type="project" value="InterPro"/>
</dbReference>
<dbReference type="GO" id="GO:0005524">
    <property type="term" value="F:ATP binding"/>
    <property type="evidence" value="ECO:0007669"/>
    <property type="project" value="UniProtKB-KW"/>
</dbReference>
<dbReference type="GO" id="GO:0050567">
    <property type="term" value="F:glutaminyl-tRNA synthase (glutamine-hydrolyzing) activity"/>
    <property type="evidence" value="ECO:0007669"/>
    <property type="project" value="UniProtKB-UniRule"/>
</dbReference>
<dbReference type="GO" id="GO:0006412">
    <property type="term" value="P:translation"/>
    <property type="evidence" value="ECO:0007669"/>
    <property type="project" value="UniProtKB-UniRule"/>
</dbReference>
<dbReference type="Gene3D" id="3.90.1300.10">
    <property type="entry name" value="Amidase signature (AS) domain"/>
    <property type="match status" value="1"/>
</dbReference>
<dbReference type="HAMAP" id="MF_00120">
    <property type="entry name" value="GatA"/>
    <property type="match status" value="1"/>
</dbReference>
<dbReference type="InterPro" id="IPR000120">
    <property type="entry name" value="Amidase"/>
</dbReference>
<dbReference type="InterPro" id="IPR020556">
    <property type="entry name" value="Amidase_CS"/>
</dbReference>
<dbReference type="InterPro" id="IPR023631">
    <property type="entry name" value="Amidase_dom"/>
</dbReference>
<dbReference type="InterPro" id="IPR036928">
    <property type="entry name" value="AS_sf"/>
</dbReference>
<dbReference type="InterPro" id="IPR004412">
    <property type="entry name" value="GatA"/>
</dbReference>
<dbReference type="NCBIfam" id="TIGR00132">
    <property type="entry name" value="gatA"/>
    <property type="match status" value="1"/>
</dbReference>
<dbReference type="PANTHER" id="PTHR11895:SF151">
    <property type="entry name" value="GLUTAMYL-TRNA(GLN) AMIDOTRANSFERASE SUBUNIT A"/>
    <property type="match status" value="1"/>
</dbReference>
<dbReference type="PANTHER" id="PTHR11895">
    <property type="entry name" value="TRANSAMIDASE"/>
    <property type="match status" value="1"/>
</dbReference>
<dbReference type="Pfam" id="PF01425">
    <property type="entry name" value="Amidase"/>
    <property type="match status" value="1"/>
</dbReference>
<dbReference type="SUPFAM" id="SSF75304">
    <property type="entry name" value="Amidase signature (AS) enzymes"/>
    <property type="match status" value="1"/>
</dbReference>
<dbReference type="PROSITE" id="PS00571">
    <property type="entry name" value="AMIDASES"/>
    <property type="match status" value="1"/>
</dbReference>
<accession>A7I1S8</accession>
<sequence>MITLKEALKLSKDEILALRKELKDKILKTKDLGAYIEQLTGEDLNESGSGIPIAIKDNIQVKNWSVTSASNILQGYVAPYDATVITKLRSAGFAPFGRTNMDEFAMGSTTESSFYGKTLNPTDYSRVPGGSSGGSAAAVAAGIAVAALGSDTGGSIRQPAAFCGCVGFKPTYGRVSRYGLAAYSSSLDQIGPITQNVTDAAILFDVIAGYDKMDSTSYSKEFISTADKLNSDRKLTIAVIENFVNETKDEVKSALLKTIEKLKSAGHKIIYKNLLNSKYNIAAYYIIATAEASTNLSRYDGVRYGNRAKASNLNELYANTRSAGFGEEVQRRMLLGTFVLSSGYYDAYYIKAQKARAYIKKEYEKILDEADLIFMPIAPSVAYKFGELANPLDAYLSDVYTIGVNLAGLPAISVPIAKNSENLNISAQLIGRAYDEQTVLDGALNLEKIIKG</sequence>
<keyword id="KW-0067">ATP-binding</keyword>
<keyword id="KW-0436">Ligase</keyword>
<keyword id="KW-0547">Nucleotide-binding</keyword>
<keyword id="KW-0648">Protein biosynthesis</keyword>
<keyword id="KW-1185">Reference proteome</keyword>
<evidence type="ECO:0000255" key="1">
    <source>
        <dbReference type="HAMAP-Rule" id="MF_00120"/>
    </source>
</evidence>
<name>GATA_CAMHC</name>
<comment type="function">
    <text evidence="1">Allows the formation of correctly charged Gln-tRNA(Gln) through the transamidation of misacylated Glu-tRNA(Gln) in organisms which lack glutaminyl-tRNA synthetase. The reaction takes place in the presence of glutamine and ATP through an activated gamma-phospho-Glu-tRNA(Gln).</text>
</comment>
<comment type="catalytic activity">
    <reaction evidence="1">
        <text>L-glutamyl-tRNA(Gln) + L-glutamine + ATP + H2O = L-glutaminyl-tRNA(Gln) + L-glutamate + ADP + phosphate + H(+)</text>
        <dbReference type="Rhea" id="RHEA:17521"/>
        <dbReference type="Rhea" id="RHEA-COMP:9681"/>
        <dbReference type="Rhea" id="RHEA-COMP:9684"/>
        <dbReference type="ChEBI" id="CHEBI:15377"/>
        <dbReference type="ChEBI" id="CHEBI:15378"/>
        <dbReference type="ChEBI" id="CHEBI:29985"/>
        <dbReference type="ChEBI" id="CHEBI:30616"/>
        <dbReference type="ChEBI" id="CHEBI:43474"/>
        <dbReference type="ChEBI" id="CHEBI:58359"/>
        <dbReference type="ChEBI" id="CHEBI:78520"/>
        <dbReference type="ChEBI" id="CHEBI:78521"/>
        <dbReference type="ChEBI" id="CHEBI:456216"/>
        <dbReference type="EC" id="6.3.5.7"/>
    </reaction>
</comment>
<comment type="subunit">
    <text evidence="1">Heterotrimer of A, B and C subunits.</text>
</comment>
<comment type="similarity">
    <text evidence="1">Belongs to the amidase family. GatA subfamily.</text>
</comment>
<feature type="chain" id="PRO_1000015817" description="Glutamyl-tRNA(Gln) amidotransferase subunit A">
    <location>
        <begin position="1"/>
        <end position="452"/>
    </location>
</feature>
<feature type="active site" description="Charge relay system" evidence="1">
    <location>
        <position position="56"/>
    </location>
</feature>
<feature type="active site" description="Charge relay system" evidence="1">
    <location>
        <position position="131"/>
    </location>
</feature>
<feature type="active site" description="Acyl-ester intermediate" evidence="1">
    <location>
        <position position="155"/>
    </location>
</feature>
<proteinExistence type="inferred from homology"/>
<organism>
    <name type="scientific">Campylobacter hominis (strain ATCC BAA-381 / DSM 21671 / CCUG 45161 / LMG 19568 / NCTC 13146 / CH001A)</name>
    <dbReference type="NCBI Taxonomy" id="360107"/>
    <lineage>
        <taxon>Bacteria</taxon>
        <taxon>Pseudomonadati</taxon>
        <taxon>Campylobacterota</taxon>
        <taxon>Epsilonproteobacteria</taxon>
        <taxon>Campylobacterales</taxon>
        <taxon>Campylobacteraceae</taxon>
        <taxon>Campylobacter</taxon>
    </lineage>
</organism>
<protein>
    <recommendedName>
        <fullName evidence="1">Glutamyl-tRNA(Gln) amidotransferase subunit A</fullName>
        <shortName evidence="1">Glu-ADT subunit A</shortName>
        <ecNumber evidence="1">6.3.5.7</ecNumber>
    </recommendedName>
</protein>
<gene>
    <name evidence="1" type="primary">gatA</name>
    <name type="ordered locus">CHAB381_0907</name>
</gene>